<evidence type="ECO:0000255" key="1">
    <source>
        <dbReference type="HAMAP-Rule" id="MF_01306"/>
    </source>
</evidence>
<evidence type="ECO:0000256" key="2">
    <source>
        <dbReference type="SAM" id="MobiDB-lite"/>
    </source>
</evidence>
<evidence type="ECO:0000305" key="3"/>
<accession>A5EX95</accession>
<name>RS4_DICNV</name>
<reference key="1">
    <citation type="journal article" date="2007" name="Nat. Biotechnol.">
        <title>Genome sequence and identification of candidate vaccine antigens from the animal pathogen Dichelobacter nodosus.</title>
        <authorList>
            <person name="Myers G.S.A."/>
            <person name="Parker D."/>
            <person name="Al-Hasani K."/>
            <person name="Kennan R.M."/>
            <person name="Seemann T."/>
            <person name="Ren Q."/>
            <person name="Badger J.H."/>
            <person name="Selengut J.D."/>
            <person name="Deboy R.T."/>
            <person name="Tettelin H."/>
            <person name="Boyce J.D."/>
            <person name="McCarl V.P."/>
            <person name="Han X."/>
            <person name="Nelson W.C."/>
            <person name="Madupu R."/>
            <person name="Mohamoud Y."/>
            <person name="Holley T."/>
            <person name="Fedorova N."/>
            <person name="Khouri H."/>
            <person name="Bottomley S.P."/>
            <person name="Whittington R.J."/>
            <person name="Adler B."/>
            <person name="Songer J.G."/>
            <person name="Rood J.I."/>
            <person name="Paulsen I.T."/>
        </authorList>
    </citation>
    <scope>NUCLEOTIDE SEQUENCE [LARGE SCALE GENOMIC DNA]</scope>
    <source>
        <strain>VCS1703A</strain>
    </source>
</reference>
<sequence length="206" mass="23388">MARYIGPKCRLARREGVDLELKSGVRPSESKCNMNAAPGQHGGRRGRLSDYGGQLREKQKLKRTYGVLERQFRNYYKKAVQQKGSTGENLLILLEQRLDNVVYRMGYGSTRAEARQLVSHGAIEVNGQRVTIASYQVQAEDIVSVREQSRKQIRIQSALEIAKQRGFVDWIEVDAAKMSGQFKRVPERIDLSADINESLVVELYSK</sequence>
<protein>
    <recommendedName>
        <fullName evidence="1">Small ribosomal subunit protein uS4</fullName>
    </recommendedName>
    <alternativeName>
        <fullName evidence="3">30S ribosomal protein S4</fullName>
    </alternativeName>
</protein>
<comment type="function">
    <text evidence="1">One of the primary rRNA binding proteins, it binds directly to 16S rRNA where it nucleates assembly of the body of the 30S subunit.</text>
</comment>
<comment type="function">
    <text evidence="1">With S5 and S12 plays an important role in translational accuracy.</text>
</comment>
<comment type="subunit">
    <text evidence="1">Part of the 30S ribosomal subunit. Contacts protein S5. The interaction surface between S4 and S5 is involved in control of translational fidelity.</text>
</comment>
<comment type="similarity">
    <text evidence="1">Belongs to the universal ribosomal protein uS4 family.</text>
</comment>
<feature type="chain" id="PRO_0000322294" description="Small ribosomal subunit protein uS4">
    <location>
        <begin position="1"/>
        <end position="206"/>
    </location>
</feature>
<feature type="domain" description="S4 RNA-binding" evidence="1">
    <location>
        <begin position="96"/>
        <end position="158"/>
    </location>
</feature>
<feature type="region of interest" description="Disordered" evidence="2">
    <location>
        <begin position="27"/>
        <end position="47"/>
    </location>
</feature>
<keyword id="KW-1185">Reference proteome</keyword>
<keyword id="KW-0687">Ribonucleoprotein</keyword>
<keyword id="KW-0689">Ribosomal protein</keyword>
<keyword id="KW-0694">RNA-binding</keyword>
<keyword id="KW-0699">rRNA-binding</keyword>
<proteinExistence type="inferred from homology"/>
<organism>
    <name type="scientific">Dichelobacter nodosus (strain VCS1703A)</name>
    <dbReference type="NCBI Taxonomy" id="246195"/>
    <lineage>
        <taxon>Bacteria</taxon>
        <taxon>Pseudomonadati</taxon>
        <taxon>Pseudomonadota</taxon>
        <taxon>Gammaproteobacteria</taxon>
        <taxon>Cardiobacteriales</taxon>
        <taxon>Cardiobacteriaceae</taxon>
        <taxon>Dichelobacter</taxon>
    </lineage>
</organism>
<dbReference type="EMBL" id="CP000513">
    <property type="protein sequence ID" value="ABQ14258.1"/>
    <property type="molecule type" value="Genomic_DNA"/>
</dbReference>
<dbReference type="RefSeq" id="WP_012031547.1">
    <property type="nucleotide sequence ID" value="NC_009446.1"/>
</dbReference>
<dbReference type="SMR" id="A5EX95"/>
<dbReference type="STRING" id="246195.DNO_1252"/>
<dbReference type="KEGG" id="dno:DNO_1252"/>
<dbReference type="eggNOG" id="COG0522">
    <property type="taxonomic scope" value="Bacteria"/>
</dbReference>
<dbReference type="HOGENOM" id="CLU_092403_0_2_6"/>
<dbReference type="OrthoDB" id="9803672at2"/>
<dbReference type="Proteomes" id="UP000000248">
    <property type="component" value="Chromosome"/>
</dbReference>
<dbReference type="GO" id="GO:0015935">
    <property type="term" value="C:small ribosomal subunit"/>
    <property type="evidence" value="ECO:0007669"/>
    <property type="project" value="InterPro"/>
</dbReference>
<dbReference type="GO" id="GO:0019843">
    <property type="term" value="F:rRNA binding"/>
    <property type="evidence" value="ECO:0007669"/>
    <property type="project" value="UniProtKB-UniRule"/>
</dbReference>
<dbReference type="GO" id="GO:0003735">
    <property type="term" value="F:structural constituent of ribosome"/>
    <property type="evidence" value="ECO:0007669"/>
    <property type="project" value="InterPro"/>
</dbReference>
<dbReference type="GO" id="GO:0042274">
    <property type="term" value="P:ribosomal small subunit biogenesis"/>
    <property type="evidence" value="ECO:0007669"/>
    <property type="project" value="TreeGrafter"/>
</dbReference>
<dbReference type="GO" id="GO:0006412">
    <property type="term" value="P:translation"/>
    <property type="evidence" value="ECO:0007669"/>
    <property type="project" value="UniProtKB-UniRule"/>
</dbReference>
<dbReference type="CDD" id="cd00165">
    <property type="entry name" value="S4"/>
    <property type="match status" value="1"/>
</dbReference>
<dbReference type="FunFam" id="1.10.1050.10:FF:000001">
    <property type="entry name" value="30S ribosomal protein S4"/>
    <property type="match status" value="1"/>
</dbReference>
<dbReference type="FunFam" id="3.10.290.10:FF:000001">
    <property type="entry name" value="30S ribosomal protein S4"/>
    <property type="match status" value="1"/>
</dbReference>
<dbReference type="Gene3D" id="1.10.1050.10">
    <property type="entry name" value="Ribosomal Protein S4 Delta 41, Chain A, domain 1"/>
    <property type="match status" value="1"/>
</dbReference>
<dbReference type="Gene3D" id="3.10.290.10">
    <property type="entry name" value="RNA-binding S4 domain"/>
    <property type="match status" value="1"/>
</dbReference>
<dbReference type="HAMAP" id="MF_01306_B">
    <property type="entry name" value="Ribosomal_uS4_B"/>
    <property type="match status" value="1"/>
</dbReference>
<dbReference type="InterPro" id="IPR022801">
    <property type="entry name" value="Ribosomal_uS4"/>
</dbReference>
<dbReference type="InterPro" id="IPR005709">
    <property type="entry name" value="Ribosomal_uS4_bac-type"/>
</dbReference>
<dbReference type="InterPro" id="IPR018079">
    <property type="entry name" value="Ribosomal_uS4_CS"/>
</dbReference>
<dbReference type="InterPro" id="IPR001912">
    <property type="entry name" value="Ribosomal_uS4_N"/>
</dbReference>
<dbReference type="InterPro" id="IPR002942">
    <property type="entry name" value="S4_RNA-bd"/>
</dbReference>
<dbReference type="InterPro" id="IPR036986">
    <property type="entry name" value="S4_RNA-bd_sf"/>
</dbReference>
<dbReference type="NCBIfam" id="NF003717">
    <property type="entry name" value="PRK05327.1"/>
    <property type="match status" value="1"/>
</dbReference>
<dbReference type="NCBIfam" id="TIGR01017">
    <property type="entry name" value="rpsD_bact"/>
    <property type="match status" value="1"/>
</dbReference>
<dbReference type="PANTHER" id="PTHR11831">
    <property type="entry name" value="30S 40S RIBOSOMAL PROTEIN"/>
    <property type="match status" value="1"/>
</dbReference>
<dbReference type="PANTHER" id="PTHR11831:SF4">
    <property type="entry name" value="SMALL RIBOSOMAL SUBUNIT PROTEIN US4M"/>
    <property type="match status" value="1"/>
</dbReference>
<dbReference type="Pfam" id="PF00163">
    <property type="entry name" value="Ribosomal_S4"/>
    <property type="match status" value="1"/>
</dbReference>
<dbReference type="Pfam" id="PF01479">
    <property type="entry name" value="S4"/>
    <property type="match status" value="1"/>
</dbReference>
<dbReference type="SMART" id="SM01390">
    <property type="entry name" value="Ribosomal_S4"/>
    <property type="match status" value="1"/>
</dbReference>
<dbReference type="SMART" id="SM00363">
    <property type="entry name" value="S4"/>
    <property type="match status" value="1"/>
</dbReference>
<dbReference type="SUPFAM" id="SSF55174">
    <property type="entry name" value="Alpha-L RNA-binding motif"/>
    <property type="match status" value="1"/>
</dbReference>
<dbReference type="PROSITE" id="PS00632">
    <property type="entry name" value="RIBOSOMAL_S4"/>
    <property type="match status" value="1"/>
</dbReference>
<dbReference type="PROSITE" id="PS50889">
    <property type="entry name" value="S4"/>
    <property type="match status" value="1"/>
</dbReference>
<gene>
    <name evidence="1" type="primary">rpsD</name>
    <name type="ordered locus">DNO_1252</name>
</gene>